<sequence length="1070" mass="120464">MLEDGKGGITTIPGLNQIQFEGFCRFIDQGLTEELYKFQKIEDIDQEIEFQLFAETYQLVEPLIKERDAVYDSLTYSSELYVSAGLIRKASKDMQEQKIFIGSIPIMNSLGTSIVNGIYRIVINQILQSPGIYYRSELDQNGISVYTGTIISDWGGRSELEIDRKARIWARVSRKQKISILVLSSAMGSNLREIIENVCYPEILLSFLRDKEKKKIGSKENAILEFYKKFACVGGDPLFSESLCKELQNKFFQQRCELGRIGRRNMNRRLHLDIPQNNTFLLPRDILEATDLLIGLKFGMGTLDDMNHLQNKRIRSVADLLQDKFGLALVRLENAVQGTICGAIHHKKIPTPQNLVTSTLLTTTYESFFGLHPLSQVLDRTNPLTQIVHARKVSSLGPGGLTGRTASFRIRDIHPSHYGRICPIDTSEGINVGLIGSLAIHVRIGNWGSLESPFFKISDRLTGVRVLHLSPGRDEYYMVAAGNSLALNQDIQEDLVVPARFRQEFLTIAWEQVNLRSIFPFQYFSIGTSLIPFIEHNDANRALMSSNMQRQAVPLAWSEKCIVGTGVERQAALDSGSLAIAEREGRVIYTDTEKILVSGDGKTISIPLVMYQRSNKNTCMYQQPQVRRGQFIKKGQILADGAATVEGELALGKSVLVAYMPWEGYNYEDAVLISECLVYEDIFTSFHIRKYEIQTHVTTQGPEKVTNEIPHLEAHLIRNLDKNGIVLQGSWVEPGDVLVGKLTPQVVKESSYAPEDRLLRAILGIQVSASKETCLKVPIGGRGRVIDVRWIQKKGGYGYNPEKIRVYILQKREIKVGDKVAGRHGNKGIISKILPRQDMPYLQDGRSVDLVFNPLGVPSRMNVGQIFECSLGLAGSLLDRHYRIAPFDERYEQEASRKIVFSELYEASKQTANPWAFEPEYPGKSRIFDGRTGNTFEHPVLIGKPYILKLIHQVDDKIHGRSSGHYALVTQQPLRGRAKQGGQRVGEMEVWALEGFGVAHILQEMLTYKSDHIRARQEVLGTTIVGGTIPNPKNAPESFRLLVRELRSLALELTHFLVSEKNFQVNKREA</sequence>
<keyword id="KW-0240">DNA-directed RNA polymerase</keyword>
<keyword id="KW-0548">Nucleotidyltransferase</keyword>
<keyword id="KW-0934">Plastid</keyword>
<keyword id="KW-0804">Transcription</keyword>
<keyword id="KW-0808">Transferase</keyword>
<proteinExistence type="inferred from homology"/>
<gene>
    <name evidence="1" type="primary">rpoB</name>
</gene>
<organism>
    <name type="scientific">Cuscuta exaltata</name>
    <name type="common">Tall dodder</name>
    <dbReference type="NCBI Taxonomy" id="476139"/>
    <lineage>
        <taxon>Eukaryota</taxon>
        <taxon>Viridiplantae</taxon>
        <taxon>Streptophyta</taxon>
        <taxon>Embryophyta</taxon>
        <taxon>Tracheophyta</taxon>
        <taxon>Spermatophyta</taxon>
        <taxon>Magnoliopsida</taxon>
        <taxon>eudicotyledons</taxon>
        <taxon>Gunneridae</taxon>
        <taxon>Pentapetalae</taxon>
        <taxon>asterids</taxon>
        <taxon>lamiids</taxon>
        <taxon>Solanales</taxon>
        <taxon>Convolvulaceae</taxon>
        <taxon>Cuscuteae</taxon>
        <taxon>Cuscuta</taxon>
        <taxon>Cuscuta subgen. Monogynella</taxon>
    </lineage>
</organism>
<accession>A8W3B6</accession>
<dbReference type="EC" id="2.7.7.6" evidence="1"/>
<dbReference type="EMBL" id="EU189132">
    <property type="protein sequence ID" value="ABW83687.1"/>
    <property type="molecule type" value="Genomic_DNA"/>
</dbReference>
<dbReference type="RefSeq" id="YP_001542523.1">
    <property type="nucleotide sequence ID" value="NC_009963.1"/>
</dbReference>
<dbReference type="SMR" id="A8W3B6"/>
<dbReference type="GeneID" id="5729608"/>
<dbReference type="GO" id="GO:0000428">
    <property type="term" value="C:DNA-directed RNA polymerase complex"/>
    <property type="evidence" value="ECO:0007669"/>
    <property type="project" value="UniProtKB-KW"/>
</dbReference>
<dbReference type="GO" id="GO:0005739">
    <property type="term" value="C:mitochondrion"/>
    <property type="evidence" value="ECO:0007669"/>
    <property type="project" value="GOC"/>
</dbReference>
<dbReference type="GO" id="GO:0009536">
    <property type="term" value="C:plastid"/>
    <property type="evidence" value="ECO:0007669"/>
    <property type="project" value="UniProtKB-SubCell"/>
</dbReference>
<dbReference type="GO" id="GO:0003677">
    <property type="term" value="F:DNA binding"/>
    <property type="evidence" value="ECO:0007669"/>
    <property type="project" value="UniProtKB-UniRule"/>
</dbReference>
<dbReference type="GO" id="GO:0003899">
    <property type="term" value="F:DNA-directed RNA polymerase activity"/>
    <property type="evidence" value="ECO:0007669"/>
    <property type="project" value="UniProtKB-UniRule"/>
</dbReference>
<dbReference type="GO" id="GO:0032549">
    <property type="term" value="F:ribonucleoside binding"/>
    <property type="evidence" value="ECO:0007669"/>
    <property type="project" value="InterPro"/>
</dbReference>
<dbReference type="GO" id="GO:0006351">
    <property type="term" value="P:DNA-templated transcription"/>
    <property type="evidence" value="ECO:0007669"/>
    <property type="project" value="UniProtKB-UniRule"/>
</dbReference>
<dbReference type="CDD" id="cd00653">
    <property type="entry name" value="RNA_pol_B_RPB2"/>
    <property type="match status" value="1"/>
</dbReference>
<dbReference type="Gene3D" id="2.40.50.100">
    <property type="match status" value="1"/>
</dbReference>
<dbReference type="Gene3D" id="2.40.50.150">
    <property type="match status" value="1"/>
</dbReference>
<dbReference type="Gene3D" id="3.90.1100.10">
    <property type="match status" value="1"/>
</dbReference>
<dbReference type="Gene3D" id="2.30.150.10">
    <property type="entry name" value="DNA-directed RNA polymerase, beta subunit, external 1 domain"/>
    <property type="match status" value="1"/>
</dbReference>
<dbReference type="Gene3D" id="2.40.270.10">
    <property type="entry name" value="DNA-directed RNA polymerase, subunit 2, domain 6"/>
    <property type="match status" value="2"/>
</dbReference>
<dbReference type="Gene3D" id="3.90.1800.10">
    <property type="entry name" value="RNA polymerase alpha subunit dimerisation domain"/>
    <property type="match status" value="1"/>
</dbReference>
<dbReference type="Gene3D" id="3.90.1110.10">
    <property type="entry name" value="RNA polymerase Rpb2, domain 2"/>
    <property type="match status" value="1"/>
</dbReference>
<dbReference type="HAMAP" id="MF_01321">
    <property type="entry name" value="RNApol_bact_RpoB"/>
    <property type="match status" value="1"/>
</dbReference>
<dbReference type="InterPro" id="IPR042107">
    <property type="entry name" value="DNA-dir_RNA_pol_bsu_ext_1_sf"/>
</dbReference>
<dbReference type="InterPro" id="IPR015712">
    <property type="entry name" value="DNA-dir_RNA_pol_su2"/>
</dbReference>
<dbReference type="InterPro" id="IPR007120">
    <property type="entry name" value="DNA-dir_RNAP_su2_dom"/>
</dbReference>
<dbReference type="InterPro" id="IPR037033">
    <property type="entry name" value="DNA-dir_RNAP_su2_hyb_sf"/>
</dbReference>
<dbReference type="InterPro" id="IPR010243">
    <property type="entry name" value="RNA_pol_bsu_bac"/>
</dbReference>
<dbReference type="InterPro" id="IPR007121">
    <property type="entry name" value="RNA_pol_bsu_CS"/>
</dbReference>
<dbReference type="InterPro" id="IPR007644">
    <property type="entry name" value="RNA_pol_bsu_protrusion"/>
</dbReference>
<dbReference type="InterPro" id="IPR007642">
    <property type="entry name" value="RNA_pol_Rpb2_2"/>
</dbReference>
<dbReference type="InterPro" id="IPR037034">
    <property type="entry name" value="RNA_pol_Rpb2_2_sf"/>
</dbReference>
<dbReference type="InterPro" id="IPR007645">
    <property type="entry name" value="RNA_pol_Rpb2_3"/>
</dbReference>
<dbReference type="InterPro" id="IPR007641">
    <property type="entry name" value="RNA_pol_Rpb2_7"/>
</dbReference>
<dbReference type="InterPro" id="IPR014724">
    <property type="entry name" value="RNA_pol_RPB2_OB-fold"/>
</dbReference>
<dbReference type="NCBIfam" id="NF001616">
    <property type="entry name" value="PRK00405.1"/>
    <property type="match status" value="1"/>
</dbReference>
<dbReference type="PANTHER" id="PTHR20856">
    <property type="entry name" value="DNA-DIRECTED RNA POLYMERASE I SUBUNIT 2"/>
    <property type="match status" value="1"/>
</dbReference>
<dbReference type="Pfam" id="PF04563">
    <property type="entry name" value="RNA_pol_Rpb2_1"/>
    <property type="match status" value="1"/>
</dbReference>
<dbReference type="Pfam" id="PF04561">
    <property type="entry name" value="RNA_pol_Rpb2_2"/>
    <property type="match status" value="1"/>
</dbReference>
<dbReference type="Pfam" id="PF04565">
    <property type="entry name" value="RNA_pol_Rpb2_3"/>
    <property type="match status" value="1"/>
</dbReference>
<dbReference type="Pfam" id="PF00562">
    <property type="entry name" value="RNA_pol_Rpb2_6"/>
    <property type="match status" value="1"/>
</dbReference>
<dbReference type="Pfam" id="PF04560">
    <property type="entry name" value="RNA_pol_Rpb2_7"/>
    <property type="match status" value="1"/>
</dbReference>
<dbReference type="SUPFAM" id="SSF64484">
    <property type="entry name" value="beta and beta-prime subunits of DNA dependent RNA-polymerase"/>
    <property type="match status" value="1"/>
</dbReference>
<dbReference type="PROSITE" id="PS01166">
    <property type="entry name" value="RNA_POL_BETA"/>
    <property type="match status" value="1"/>
</dbReference>
<comment type="function">
    <text evidence="1">DNA-dependent RNA polymerase catalyzes the transcription of DNA into RNA using the four ribonucleoside triphosphates as substrates.</text>
</comment>
<comment type="catalytic activity">
    <reaction evidence="1">
        <text>RNA(n) + a ribonucleoside 5'-triphosphate = RNA(n+1) + diphosphate</text>
        <dbReference type="Rhea" id="RHEA:21248"/>
        <dbReference type="Rhea" id="RHEA-COMP:14527"/>
        <dbReference type="Rhea" id="RHEA-COMP:17342"/>
        <dbReference type="ChEBI" id="CHEBI:33019"/>
        <dbReference type="ChEBI" id="CHEBI:61557"/>
        <dbReference type="ChEBI" id="CHEBI:140395"/>
        <dbReference type="EC" id="2.7.7.6"/>
    </reaction>
</comment>
<comment type="subunit">
    <text evidence="1">In plastids the minimal PEP RNA polymerase catalytic core is composed of four subunits: alpha, beta, beta', and beta''. When a (nuclear-encoded) sigma factor is associated with the core the holoenzyme is formed, which can initiate transcription.</text>
</comment>
<comment type="subcellular location">
    <subcellularLocation>
        <location>Plastid</location>
    </subcellularLocation>
</comment>
<comment type="similarity">
    <text evidence="1">Belongs to the RNA polymerase beta chain family.</text>
</comment>
<comment type="caution">
    <text evidence="2">Young tissue from this organism is photosynthetic and contains some thylakoids, although the photosynthetic activity does not exceed the light compensation point.</text>
</comment>
<reference key="1">
    <citation type="journal article" date="2007" name="BMC Plant Biol.">
        <title>Complete plastid genome sequences suggest strong selection for retention of photosynthetic genes in the parasitic plant genus Cuscuta.</title>
        <authorList>
            <person name="McNeal J.R."/>
            <person name="Kuehl J.V."/>
            <person name="Boore J.L."/>
            <person name="dePamphilis C.W."/>
        </authorList>
    </citation>
    <scope>NUCLEOTIDE SEQUENCE [LARGE SCALE GENOMIC DNA]</scope>
</reference>
<geneLocation type="plastid"/>
<feature type="chain" id="PRO_0000329199" description="DNA-directed RNA polymerase subunit beta">
    <location>
        <begin position="1"/>
        <end position="1070"/>
    </location>
</feature>
<name>RPOB_CUSEX</name>
<evidence type="ECO:0000255" key="1">
    <source>
        <dbReference type="HAMAP-Rule" id="MF_01321"/>
    </source>
</evidence>
<evidence type="ECO:0000305" key="2"/>
<protein>
    <recommendedName>
        <fullName evidence="1">DNA-directed RNA polymerase subunit beta</fullName>
        <ecNumber evidence="1">2.7.7.6</ecNumber>
    </recommendedName>
    <alternativeName>
        <fullName evidence="1">PEP</fullName>
    </alternativeName>
    <alternativeName>
        <fullName evidence="1">Plastid-encoded RNA polymerase subunit beta</fullName>
        <shortName evidence="1">RNA polymerase subunit beta</shortName>
    </alternativeName>
</protein>